<evidence type="ECO:0000250" key="1">
    <source>
        <dbReference type="UniProtKB" id="Q4U2R6"/>
    </source>
</evidence>
<evidence type="ECO:0000255" key="2"/>
<evidence type="ECO:0000305" key="3"/>
<dbReference type="EMBL" id="BC091453">
    <property type="protein sequence ID" value="AAH91453.1"/>
    <property type="molecule type" value="mRNA"/>
</dbReference>
<dbReference type="RefSeq" id="NP_001013494.1">
    <property type="nucleotide sequence ID" value="NM_001013476.1"/>
</dbReference>
<dbReference type="SMR" id="Q5BJJ8"/>
<dbReference type="FunCoup" id="Q5BJJ8">
    <property type="interactions" value="932"/>
</dbReference>
<dbReference type="STRING" id="7955.ENSDARP00000060593"/>
<dbReference type="PaxDb" id="7955-ENSDARP00000088311"/>
<dbReference type="Ensembl" id="ENSDART00000060594">
    <property type="protein sequence ID" value="ENSDARP00000060593"/>
    <property type="gene ID" value="ENSDARG00000041340"/>
</dbReference>
<dbReference type="Ensembl" id="ENSDART00000184064">
    <property type="protein sequence ID" value="ENSDARP00000151000"/>
    <property type="gene ID" value="ENSDARG00000113440"/>
</dbReference>
<dbReference type="GeneID" id="797002"/>
<dbReference type="KEGG" id="dre:797002"/>
<dbReference type="AGR" id="ZFIN:ZDB-GENE-050320-40"/>
<dbReference type="CTD" id="51258"/>
<dbReference type="ZFIN" id="ZDB-GENE-050320-40">
    <property type="gene designation" value="mrpl51"/>
</dbReference>
<dbReference type="eggNOG" id="KOG4045">
    <property type="taxonomic scope" value="Eukaryota"/>
</dbReference>
<dbReference type="HOGENOM" id="CLU_150741_0_0_1"/>
<dbReference type="InParanoid" id="Q5BJJ8"/>
<dbReference type="OrthoDB" id="10059330at2759"/>
<dbReference type="PhylomeDB" id="Q5BJJ8"/>
<dbReference type="TreeFam" id="TF106130"/>
<dbReference type="Reactome" id="R-DRE-5389840">
    <property type="pathway name" value="Mitochondrial translation elongation"/>
</dbReference>
<dbReference type="Reactome" id="R-DRE-5419276">
    <property type="pathway name" value="Mitochondrial translation termination"/>
</dbReference>
<dbReference type="PRO" id="PR:Q5BJJ8"/>
<dbReference type="Proteomes" id="UP000000437">
    <property type="component" value="Alternate scaffold 16"/>
</dbReference>
<dbReference type="Proteomes" id="UP000000437">
    <property type="component" value="Chromosome 16"/>
</dbReference>
<dbReference type="Bgee" id="ENSDARG00000041340">
    <property type="expression patterns" value="Expressed in liver and 28 other cell types or tissues"/>
</dbReference>
<dbReference type="ExpressionAtlas" id="Q5BJJ8">
    <property type="expression patterns" value="baseline and differential"/>
</dbReference>
<dbReference type="GO" id="GO:0005762">
    <property type="term" value="C:mitochondrial large ribosomal subunit"/>
    <property type="evidence" value="ECO:0000250"/>
    <property type="project" value="UniProtKB"/>
</dbReference>
<dbReference type="GO" id="GO:0003735">
    <property type="term" value="F:structural constituent of ribosome"/>
    <property type="evidence" value="ECO:0000250"/>
    <property type="project" value="UniProtKB"/>
</dbReference>
<dbReference type="GO" id="GO:0006412">
    <property type="term" value="P:translation"/>
    <property type="evidence" value="ECO:0000250"/>
    <property type="project" value="UniProtKB"/>
</dbReference>
<dbReference type="InterPro" id="IPR019373">
    <property type="entry name" value="Ribosomal_mL51"/>
</dbReference>
<dbReference type="PANTHER" id="PTHR13409:SF0">
    <property type="entry name" value="LARGE RIBOSOMAL SUBUNIT PROTEIN ML51"/>
    <property type="match status" value="1"/>
</dbReference>
<dbReference type="PANTHER" id="PTHR13409">
    <property type="entry name" value="MITOCHONDRIAL 39S RIBOSOMAL PROTEIN L51"/>
    <property type="match status" value="1"/>
</dbReference>
<dbReference type="Pfam" id="PF10244">
    <property type="entry name" value="MRP-L51"/>
    <property type="match status" value="1"/>
</dbReference>
<organism>
    <name type="scientific">Danio rerio</name>
    <name type="common">Zebrafish</name>
    <name type="synonym">Brachydanio rerio</name>
    <dbReference type="NCBI Taxonomy" id="7955"/>
    <lineage>
        <taxon>Eukaryota</taxon>
        <taxon>Metazoa</taxon>
        <taxon>Chordata</taxon>
        <taxon>Craniata</taxon>
        <taxon>Vertebrata</taxon>
        <taxon>Euteleostomi</taxon>
        <taxon>Actinopterygii</taxon>
        <taxon>Neopterygii</taxon>
        <taxon>Teleostei</taxon>
        <taxon>Ostariophysi</taxon>
        <taxon>Cypriniformes</taxon>
        <taxon>Danionidae</taxon>
        <taxon>Danioninae</taxon>
        <taxon>Danio</taxon>
    </lineage>
</organism>
<reference key="1">
    <citation type="submission" date="2005-03" db="EMBL/GenBank/DDBJ databases">
        <authorList>
            <consortium name="NIH - Zebrafish Gene Collection (ZGC) project"/>
        </authorList>
    </citation>
    <scope>NUCLEOTIDE SEQUENCE [LARGE SCALE MRNA]</scope>
    <source>
        <tissue>Ovary</tissue>
    </source>
</reference>
<name>RM51_DANRE</name>
<feature type="transit peptide" description="Mitochondrion" evidence="2">
    <location>
        <begin position="1"/>
        <end position="31"/>
    </location>
</feature>
<feature type="chain" id="PRO_0000273085" description="Large ribosomal subunit protein mL51">
    <location>
        <begin position="32"/>
        <end position="124"/>
    </location>
</feature>
<comment type="subunit">
    <text evidence="1">Component of the mitochondrial ribosome large subunit (39S) which comprises a 16S rRNA and about 50 distinct proteins (By similarity).</text>
</comment>
<comment type="subcellular location">
    <subcellularLocation>
        <location evidence="1">Mitochondrion</location>
    </subcellularLocation>
</comment>
<comment type="similarity">
    <text evidence="3">Belongs to the mitochondrion-specific ribosomal protein mL51 family.</text>
</comment>
<proteinExistence type="evidence at transcript level"/>
<accession>Q5BJJ8</accession>
<sequence>MSVFGGLWRSAVNLCQSSRLFSTGSCARIRMHAIPKLKEVDRWTEKRSMFGVYDNIGILGDFKAHPKDMIRGPVWVRGFRGNELQRLLRKRNMVGDRMMTEDRHNLQKRISHLYRRFNRHGKHR</sequence>
<keyword id="KW-0496">Mitochondrion</keyword>
<keyword id="KW-1185">Reference proteome</keyword>
<keyword id="KW-0687">Ribonucleoprotein</keyword>
<keyword id="KW-0689">Ribosomal protein</keyword>
<keyword id="KW-0809">Transit peptide</keyword>
<gene>
    <name type="primary">mrpl51</name>
    <name type="ORF">zgc:110255</name>
</gene>
<protein>
    <recommendedName>
        <fullName evidence="3">Large ribosomal subunit protein mL51</fullName>
    </recommendedName>
    <alternativeName>
        <fullName>39S ribosomal protein L51, mitochondrial</fullName>
        <shortName>L51mt</shortName>
        <shortName>MRP-L51</shortName>
    </alternativeName>
</protein>